<proteinExistence type="evidence at protein level"/>
<reference key="1">
    <citation type="journal article" date="1998" name="FEBS Lett.">
        <title>A novel human RasGAP-like gene that maps within the prostate cancer susceptibility locus at chromosome 1q25.</title>
        <authorList>
            <person name="Noto S."/>
            <person name="Maeda T."/>
            <person name="Hattori S."/>
            <person name="Inazawa J."/>
            <person name="Imamura M."/>
            <person name="Asaka M."/>
            <person name="Hatakeyama M."/>
        </authorList>
    </citation>
    <scope>NUCLEOTIDE SEQUENCE [MRNA] (ISOFORM 1)</scope>
    <source>
        <tissue>Heart</tissue>
    </source>
</reference>
<reference key="2">
    <citation type="journal article" date="2006" name="Nature">
        <title>The DNA sequence and biological annotation of human chromosome 1.</title>
        <authorList>
            <person name="Gregory S.G."/>
            <person name="Barlow K.F."/>
            <person name="McLay K.E."/>
            <person name="Kaul R."/>
            <person name="Swarbreck D."/>
            <person name="Dunham A."/>
            <person name="Scott C.E."/>
            <person name="Howe K.L."/>
            <person name="Woodfine K."/>
            <person name="Spencer C.C.A."/>
            <person name="Jones M.C."/>
            <person name="Gillson C."/>
            <person name="Searle S."/>
            <person name="Zhou Y."/>
            <person name="Kokocinski F."/>
            <person name="McDonald L."/>
            <person name="Evans R."/>
            <person name="Phillips K."/>
            <person name="Atkinson A."/>
            <person name="Cooper R."/>
            <person name="Jones C."/>
            <person name="Hall R.E."/>
            <person name="Andrews T.D."/>
            <person name="Lloyd C."/>
            <person name="Ainscough R."/>
            <person name="Almeida J.P."/>
            <person name="Ambrose K.D."/>
            <person name="Anderson F."/>
            <person name="Andrew R.W."/>
            <person name="Ashwell R.I.S."/>
            <person name="Aubin K."/>
            <person name="Babbage A.K."/>
            <person name="Bagguley C.L."/>
            <person name="Bailey J."/>
            <person name="Beasley H."/>
            <person name="Bethel G."/>
            <person name="Bird C.P."/>
            <person name="Bray-Allen S."/>
            <person name="Brown J.Y."/>
            <person name="Brown A.J."/>
            <person name="Buckley D."/>
            <person name="Burton J."/>
            <person name="Bye J."/>
            <person name="Carder C."/>
            <person name="Chapman J.C."/>
            <person name="Clark S.Y."/>
            <person name="Clarke G."/>
            <person name="Clee C."/>
            <person name="Cobley V."/>
            <person name="Collier R.E."/>
            <person name="Corby N."/>
            <person name="Coville G.J."/>
            <person name="Davies J."/>
            <person name="Deadman R."/>
            <person name="Dunn M."/>
            <person name="Earthrowl M."/>
            <person name="Ellington A.G."/>
            <person name="Errington H."/>
            <person name="Frankish A."/>
            <person name="Frankland J."/>
            <person name="French L."/>
            <person name="Garner P."/>
            <person name="Garnett J."/>
            <person name="Gay L."/>
            <person name="Ghori M.R.J."/>
            <person name="Gibson R."/>
            <person name="Gilby L.M."/>
            <person name="Gillett W."/>
            <person name="Glithero R.J."/>
            <person name="Grafham D.V."/>
            <person name="Griffiths C."/>
            <person name="Griffiths-Jones S."/>
            <person name="Grocock R."/>
            <person name="Hammond S."/>
            <person name="Harrison E.S.I."/>
            <person name="Hart E."/>
            <person name="Haugen E."/>
            <person name="Heath P.D."/>
            <person name="Holmes S."/>
            <person name="Holt K."/>
            <person name="Howden P.J."/>
            <person name="Hunt A.R."/>
            <person name="Hunt S.E."/>
            <person name="Hunter G."/>
            <person name="Isherwood J."/>
            <person name="James R."/>
            <person name="Johnson C."/>
            <person name="Johnson D."/>
            <person name="Joy A."/>
            <person name="Kay M."/>
            <person name="Kershaw J.K."/>
            <person name="Kibukawa M."/>
            <person name="Kimberley A.M."/>
            <person name="King A."/>
            <person name="Knights A.J."/>
            <person name="Lad H."/>
            <person name="Laird G."/>
            <person name="Lawlor S."/>
            <person name="Leongamornlert D.A."/>
            <person name="Lloyd D.M."/>
            <person name="Loveland J."/>
            <person name="Lovell J."/>
            <person name="Lush M.J."/>
            <person name="Lyne R."/>
            <person name="Martin S."/>
            <person name="Mashreghi-Mohammadi M."/>
            <person name="Matthews L."/>
            <person name="Matthews N.S.W."/>
            <person name="McLaren S."/>
            <person name="Milne S."/>
            <person name="Mistry S."/>
            <person name="Moore M.J.F."/>
            <person name="Nickerson T."/>
            <person name="O'Dell C.N."/>
            <person name="Oliver K."/>
            <person name="Palmeiri A."/>
            <person name="Palmer S.A."/>
            <person name="Parker A."/>
            <person name="Patel D."/>
            <person name="Pearce A.V."/>
            <person name="Peck A.I."/>
            <person name="Pelan S."/>
            <person name="Phelps K."/>
            <person name="Phillimore B.J."/>
            <person name="Plumb R."/>
            <person name="Rajan J."/>
            <person name="Raymond C."/>
            <person name="Rouse G."/>
            <person name="Saenphimmachak C."/>
            <person name="Sehra H.K."/>
            <person name="Sheridan E."/>
            <person name="Shownkeen R."/>
            <person name="Sims S."/>
            <person name="Skuce C.D."/>
            <person name="Smith M."/>
            <person name="Steward C."/>
            <person name="Subramanian S."/>
            <person name="Sycamore N."/>
            <person name="Tracey A."/>
            <person name="Tromans A."/>
            <person name="Van Helmond Z."/>
            <person name="Wall M."/>
            <person name="Wallis J.M."/>
            <person name="White S."/>
            <person name="Whitehead S.L."/>
            <person name="Wilkinson J.E."/>
            <person name="Willey D.L."/>
            <person name="Williams H."/>
            <person name="Wilming L."/>
            <person name="Wray P.W."/>
            <person name="Wu Z."/>
            <person name="Coulson A."/>
            <person name="Vaudin M."/>
            <person name="Sulston J.E."/>
            <person name="Durbin R.M."/>
            <person name="Hubbard T."/>
            <person name="Wooster R."/>
            <person name="Dunham I."/>
            <person name="Carter N.P."/>
            <person name="McVean G."/>
            <person name="Ross M.T."/>
            <person name="Harrow J."/>
            <person name="Olson M.V."/>
            <person name="Beck S."/>
            <person name="Rogers J."/>
            <person name="Bentley D.R."/>
        </authorList>
    </citation>
    <scope>NUCLEOTIDE SEQUENCE [LARGE SCALE GENOMIC DNA]</scope>
</reference>
<reference key="3">
    <citation type="journal article" date="2004" name="Genome Res.">
        <title>The status, quality, and expansion of the NIH full-length cDNA project: the Mammalian Gene Collection (MGC).</title>
        <authorList>
            <consortium name="The MGC Project Team"/>
        </authorList>
    </citation>
    <scope>NUCLEOTIDE SEQUENCE [LARGE SCALE MRNA] OF 3-1139 (ISOFORM 2)</scope>
</reference>
<reference key="4">
    <citation type="journal article" date="2008" name="Proc. Natl. Acad. Sci. U.S.A.">
        <title>A quantitative atlas of mitotic phosphorylation.</title>
        <authorList>
            <person name="Dephoure N."/>
            <person name="Zhou C."/>
            <person name="Villen J."/>
            <person name="Beausoleil S.A."/>
            <person name="Bakalarski C.E."/>
            <person name="Elledge S.J."/>
            <person name="Gygi S.P."/>
        </authorList>
    </citation>
    <scope>PHOSPHORYLATION [LARGE SCALE ANALYSIS] AT SER-16; SER-89 AND SER-663</scope>
    <scope>IDENTIFICATION BY MASS SPECTROMETRY [LARGE SCALE ANALYSIS]</scope>
    <source>
        <tissue>Cervix carcinoma</tissue>
    </source>
</reference>
<reference key="5">
    <citation type="journal article" date="2009" name="Anal. Chem.">
        <title>Lys-N and trypsin cover complementary parts of the phosphoproteome in a refined SCX-based approach.</title>
        <authorList>
            <person name="Gauci S."/>
            <person name="Helbig A.O."/>
            <person name="Slijper M."/>
            <person name="Krijgsveld J."/>
            <person name="Heck A.J."/>
            <person name="Mohammed S."/>
        </authorList>
    </citation>
    <scope>IDENTIFICATION BY MASS SPECTROMETRY [LARGE SCALE ANALYSIS]</scope>
</reference>
<reference key="6">
    <citation type="journal article" date="2010" name="Sci. Signal.">
        <title>Quantitative phosphoproteomics reveals widespread full phosphorylation site occupancy during mitosis.</title>
        <authorList>
            <person name="Olsen J.V."/>
            <person name="Vermeulen M."/>
            <person name="Santamaria A."/>
            <person name="Kumar C."/>
            <person name="Miller M.L."/>
            <person name="Jensen L.J."/>
            <person name="Gnad F."/>
            <person name="Cox J."/>
            <person name="Jensen T.S."/>
            <person name="Nigg E.A."/>
            <person name="Brunak S."/>
            <person name="Mann M."/>
        </authorList>
    </citation>
    <scope>IDENTIFICATION BY MASS SPECTROMETRY [LARGE SCALE ANALYSIS]</scope>
    <source>
        <tissue>Cervix carcinoma</tissue>
    </source>
</reference>
<reference key="7">
    <citation type="journal article" date="2011" name="BMC Syst. Biol.">
        <title>Initial characterization of the human central proteome.</title>
        <authorList>
            <person name="Burkard T.R."/>
            <person name="Planyavsky M."/>
            <person name="Kaupe I."/>
            <person name="Breitwieser F.P."/>
            <person name="Buerckstuemmer T."/>
            <person name="Bennett K.L."/>
            <person name="Superti-Furga G."/>
            <person name="Colinge J."/>
        </authorList>
    </citation>
    <scope>IDENTIFICATION BY MASS SPECTROMETRY [LARGE SCALE ANALYSIS]</scope>
</reference>
<reference key="8">
    <citation type="journal article" date="2011" name="Sci. Signal.">
        <title>System-wide temporal characterization of the proteome and phosphoproteome of human embryonic stem cell differentiation.</title>
        <authorList>
            <person name="Rigbolt K.T."/>
            <person name="Prokhorova T.A."/>
            <person name="Akimov V."/>
            <person name="Henningsen J."/>
            <person name="Johansen P.T."/>
            <person name="Kratchmarova I."/>
            <person name="Kassem M."/>
            <person name="Mann M."/>
            <person name="Olsen J.V."/>
            <person name="Blagoev B."/>
        </authorList>
    </citation>
    <scope>PHOSPHORYLATION [LARGE SCALE ANALYSIS] AT SER-864</scope>
    <scope>IDENTIFICATION BY MASS SPECTROMETRY [LARGE SCALE ANALYSIS]</scope>
</reference>
<reference key="9">
    <citation type="journal article" date="2013" name="J. Proteome Res.">
        <title>Toward a comprehensive characterization of a human cancer cell phosphoproteome.</title>
        <authorList>
            <person name="Zhou H."/>
            <person name="Di Palma S."/>
            <person name="Preisinger C."/>
            <person name="Peng M."/>
            <person name="Polat A.N."/>
            <person name="Heck A.J."/>
            <person name="Mohammed S."/>
        </authorList>
    </citation>
    <scope>PHOSPHORYLATION [LARGE SCALE ANALYSIS] AT THR-620 AND SER-663</scope>
    <scope>IDENTIFICATION BY MASS SPECTROMETRY [LARGE SCALE ANALYSIS]</scope>
    <source>
        <tissue>Cervix carcinoma</tissue>
    </source>
</reference>
<reference key="10">
    <citation type="journal article" date="2014" name="J. Proteomics">
        <title>An enzyme assisted RP-RPLC approach for in-depth analysis of human liver phosphoproteome.</title>
        <authorList>
            <person name="Bian Y."/>
            <person name="Song C."/>
            <person name="Cheng K."/>
            <person name="Dong M."/>
            <person name="Wang F."/>
            <person name="Huang J."/>
            <person name="Sun D."/>
            <person name="Wang L."/>
            <person name="Ye M."/>
            <person name="Zou H."/>
        </authorList>
    </citation>
    <scope>PHOSPHORYLATION [LARGE SCALE ANALYSIS] AT SER-16</scope>
    <scope>IDENTIFICATION BY MASS SPECTROMETRY [LARGE SCALE ANALYSIS]</scope>
    <source>
        <tissue>Liver</tissue>
    </source>
</reference>
<reference key="11">
    <citation type="journal article" date="2022" name="J. Cell Biol.">
        <title>PEAK1 Y635 phosphorylation regulates cell migration through association with Tensin3 and integrins.</title>
        <authorList>
            <person name="Zuidema A."/>
            <person name="Atherton P."/>
            <person name="Kreft M."/>
            <person name="Hoekman L."/>
            <person name="Bleijerveld O.B."/>
            <person name="Nagaraj N."/>
            <person name="Chen N."/>
            <person name="Faessler R."/>
            <person name="Sonnenberg A."/>
        </authorList>
    </citation>
    <scope>INTERACTION WITH PEAK1</scope>
</reference>
<reference key="12">
    <citation type="journal article" date="2006" name="Science">
        <title>The consensus coding sequences of human breast and colorectal cancers.</title>
        <authorList>
            <person name="Sjoeblom T."/>
            <person name="Jones S."/>
            <person name="Wood L.D."/>
            <person name="Parsons D.W."/>
            <person name="Lin J."/>
            <person name="Barber T.D."/>
            <person name="Mandelker D."/>
            <person name="Leary R.J."/>
            <person name="Ptak J."/>
            <person name="Silliman N."/>
            <person name="Szabo S."/>
            <person name="Buckhaults P."/>
            <person name="Farrell C."/>
            <person name="Meeh P."/>
            <person name="Markowitz S.D."/>
            <person name="Willis J."/>
            <person name="Dawson D."/>
            <person name="Willson J.K.V."/>
            <person name="Gazdar A.F."/>
            <person name="Hartigan J."/>
            <person name="Wu L."/>
            <person name="Liu C."/>
            <person name="Parmigiani G."/>
            <person name="Park B.H."/>
            <person name="Bachman K.E."/>
            <person name="Papadopoulos N."/>
            <person name="Vogelstein B."/>
            <person name="Kinzler K.W."/>
            <person name="Velculescu V.E."/>
        </authorList>
    </citation>
    <scope>VARIANTS [LARGE SCALE ANALYSIS] TRP-165 AND ASP-379</scope>
</reference>
<organism>
    <name type="scientific">Homo sapiens</name>
    <name type="common">Human</name>
    <dbReference type="NCBI Taxonomy" id="9606"/>
    <lineage>
        <taxon>Eukaryota</taxon>
        <taxon>Metazoa</taxon>
        <taxon>Chordata</taxon>
        <taxon>Craniata</taxon>
        <taxon>Vertebrata</taxon>
        <taxon>Euteleostomi</taxon>
        <taxon>Mammalia</taxon>
        <taxon>Eutheria</taxon>
        <taxon>Euarchontoglires</taxon>
        <taxon>Primates</taxon>
        <taxon>Haplorrhini</taxon>
        <taxon>Catarrhini</taxon>
        <taxon>Hominidae</taxon>
        <taxon>Homo</taxon>
    </lineage>
</organism>
<comment type="function">
    <text>Inhibitory regulator of the Ras-cyclic AMP pathway.</text>
</comment>
<comment type="subunit">
    <text evidence="5">Interacts with PEAK1.</text>
</comment>
<comment type="interaction">
    <interactant intactId="EBI-359444">
        <id>Q9UJF2</id>
    </interactant>
    <interactant intactId="EBI-1050253">
        <id>Q96PC5</id>
        <label>MIA2</label>
    </interactant>
    <organismsDiffer>false</organismsDiffer>
    <experiments>3</experiments>
</comment>
<comment type="interaction">
    <interactant intactId="EBI-359444">
        <id>Q9UJF2</id>
    </interactant>
    <interactant intactId="EBI-352889">
        <id>Q15653</id>
        <label>NFKBIB</label>
    </interactant>
    <organismsDiffer>false</organismsDiffer>
    <experiments>2</experiments>
</comment>
<comment type="interaction">
    <interactant intactId="EBI-359444">
        <id>Q9UJF2</id>
    </interactant>
    <interactant intactId="EBI-359224">
        <id>Q13077</id>
        <label>TRAF1</label>
    </interactant>
    <organismsDiffer>false</organismsDiffer>
    <experiments>3</experiments>
</comment>
<comment type="interaction">
    <interactant intactId="EBI-359444">
        <id>Q9UJF2</id>
    </interactant>
    <interactant intactId="EBI-739895">
        <id>Q8N6Y0</id>
        <label>USHBP1</label>
    </interactant>
    <organismsDiffer>false</organismsDiffer>
    <experiments>3</experiments>
</comment>
<comment type="interaction">
    <interactant intactId="EBI-359444">
        <id>Q9UJF2</id>
    </interactant>
    <interactant intactId="EBI-6863741">
        <id>PRO_0000037548</id>
        <dbReference type="UniProtKB" id="Q9WMX2"/>
    </interactant>
    <organismsDiffer>true</organismsDiffer>
    <experiments>2</experiments>
</comment>
<comment type="interaction">
    <interactant intactId="EBI-12171247">
        <id>Q9UJF2-2</id>
    </interactant>
    <interactant intactId="EBI-307531">
        <id>P23508</id>
        <label>MCC</label>
    </interactant>
    <organismsDiffer>false</organismsDiffer>
    <experiments>3</experiments>
</comment>
<comment type="interaction">
    <interactant intactId="EBI-12171247">
        <id>Q9UJF2-2</id>
    </interactant>
    <interactant intactId="EBI-16439278">
        <id>Q6FHY5</id>
        <label>MEOX2</label>
    </interactant>
    <organismsDiffer>false</organismsDiffer>
    <experiments>3</experiments>
</comment>
<comment type="alternative products">
    <event type="alternative splicing"/>
    <isoform>
        <id>Q9UJF2-1</id>
        <name>1</name>
        <sequence type="displayed"/>
    </isoform>
    <isoform>
        <id>Q9UJF2-2</id>
        <name>2</name>
        <sequence type="described" ref="VSP_045777 VSP_045778"/>
    </isoform>
</comment>
<comment type="sequence caution" evidence="7">
    <conflict type="erroneous initiation">
        <sequence resource="EMBL-CDS" id="AAI10612"/>
    </conflict>
    <text>Truncated N-terminus.</text>
</comment>
<sequence>MQTPEVPAERSPRRRSISGTSTSEKPNSMDTANTSPFKVPGFFSKRLKGSIKRTKSQSKLDRNTSFRLPSLRSTDDRSRGLPKLKESRSHESLLSPCSTVECLDLGRGEPVSVKPLHSSILGQDFCFEVTYLSGSKCFSCNSASERDKWMENLRRTVQPNKDNCRRAENVLRLWIIEAKDLAPKKKYFCELCLDDTLFARTTSKTKADNIFWGEHFEFFSLPPLHSITVHIYKDVEKKKKKDKNNYVGLVNIPTASVTGRQFVEKWYPVSTPTPNKGKTGGPSIRIKSRFQTITILPMEQYKEFAEFVTSNYTMLCSVLEPVISVRNKEELACALVHILQSTGRAKDFLTDLVMSEVDRCGEHDVLIFRENTIATKSIEEYLKLVGQQYLHDALGEFIKALYESDENCEVDPSKCSSSELIDHQSNLKMCCELAFCKIINSYCVFPRELKEVFASWKQQCLNRGKQDISERLISASLFLRFLCPAIMSPSLFNLMQEYPDDRTSRTLTLIAKVIQNLANFAKFGNKEEYMAFMNDFLEHEWGGMKRFLLEISNPDTISNTPGFDGYIDLGRELSVLHSLLWEVVSQLDKGENSFLQATVAKLGPLPRVLADITKSLTNPTPIQQQLRRFTEHNSSPNVSGSLSSGLQKIFEDPTDSDLHKLKSPSQDNTDSYFRGKTLLLVQQASSQSMTYSEKDERESSLPNGRSVSLMDLQDTHAAQVEHASVMLDVPIRLTGSQLSITQVASIKQLRETQSTPQSAPQVRRPLHPALNQPGGLQPLSFQNPVYHLNNPIPAMPKASIDSSLENLSTASSRSQSNSEDFKLSGPSNSSMEDFTKRSTQSEDFSRRHTVPDRHIPLALPRQNSTGQAQIRKVDQGGLGARAKAPPSLPHSASLRSTGSMSVVSAALVAEPVQNGSRSRQQSSSSRESPVPKVRAIQRQQTQQVQSPVDSATMSPVERTAAWVLNNGQYEEDVEETEQNLDEAKHAEKYEQEITKLKERLRVSSRRLEEYERRLLVQEQQMQKLLLEYKARLEDSEERLRRQQEEKDSQMKSIISRLMAVEEELKKDHAEMQAVIDAKQKIIDAQEKRIVSLDSANTRLMSALTQVKERYSMQVRNGISPTNPTKLSITENGEFKNSSC</sequence>
<name>NGAP_HUMAN</name>
<evidence type="ECO:0000255" key="1">
    <source>
        <dbReference type="PROSITE-ProRule" id="PRU00041"/>
    </source>
</evidence>
<evidence type="ECO:0000255" key="2">
    <source>
        <dbReference type="PROSITE-ProRule" id="PRU00167"/>
    </source>
</evidence>
<evidence type="ECO:0000256" key="3">
    <source>
        <dbReference type="SAM" id="MobiDB-lite"/>
    </source>
</evidence>
<evidence type="ECO:0000269" key="4">
    <source>
    </source>
</evidence>
<evidence type="ECO:0000269" key="5">
    <source>
    </source>
</evidence>
<evidence type="ECO:0000303" key="6">
    <source>
    </source>
</evidence>
<evidence type="ECO:0000305" key="7"/>
<evidence type="ECO:0007744" key="8">
    <source>
    </source>
</evidence>
<evidence type="ECO:0007744" key="9">
    <source>
    </source>
</evidence>
<evidence type="ECO:0007744" key="10">
    <source>
    </source>
</evidence>
<evidence type="ECO:0007744" key="11">
    <source>
    </source>
</evidence>
<dbReference type="EMBL" id="AF047711">
    <property type="protein sequence ID" value="AAD04814.1"/>
    <property type="molecule type" value="mRNA"/>
</dbReference>
<dbReference type="EMBL" id="AL035702">
    <property type="status" value="NOT_ANNOTATED_CDS"/>
    <property type="molecule type" value="Genomic_DNA"/>
</dbReference>
<dbReference type="EMBL" id="AL365357">
    <property type="status" value="NOT_ANNOTATED_CDS"/>
    <property type="molecule type" value="Genomic_DNA"/>
</dbReference>
<dbReference type="EMBL" id="AL160281">
    <property type="status" value="NOT_ANNOTATED_CDS"/>
    <property type="molecule type" value="Genomic_DNA"/>
</dbReference>
<dbReference type="EMBL" id="AL499617">
    <property type="status" value="NOT_ANNOTATED_CDS"/>
    <property type="molecule type" value="Genomic_DNA"/>
</dbReference>
<dbReference type="EMBL" id="BC110611">
    <property type="protein sequence ID" value="AAI10612.1"/>
    <property type="status" value="ALT_INIT"/>
    <property type="molecule type" value="mRNA"/>
</dbReference>
<dbReference type="CCDS" id="CCDS1321.2">
    <molecule id="Q9UJF2-2"/>
</dbReference>
<dbReference type="CCDS" id="CCDS1322.1">
    <molecule id="Q9UJF2-1"/>
</dbReference>
<dbReference type="RefSeq" id="NP_004832.1">
    <molecule id="Q9UJF2-1"/>
    <property type="nucleotide sequence ID" value="NM_004841.5"/>
</dbReference>
<dbReference type="RefSeq" id="NP_733793.2">
    <molecule id="Q9UJF2-2"/>
    <property type="nucleotide sequence ID" value="NM_170692.4"/>
</dbReference>
<dbReference type="SMR" id="Q9UJF2"/>
<dbReference type="BioGRID" id="114848">
    <property type="interactions" value="165"/>
</dbReference>
<dbReference type="CORUM" id="Q9UJF2"/>
<dbReference type="DIP" id="DIP-27570N"/>
<dbReference type="FunCoup" id="Q9UJF2">
    <property type="interactions" value="1503"/>
</dbReference>
<dbReference type="IntAct" id="Q9UJF2">
    <property type="interactions" value="45"/>
</dbReference>
<dbReference type="MINT" id="Q9UJF2"/>
<dbReference type="STRING" id="9606.ENSP00000356621"/>
<dbReference type="GlyGen" id="Q9UJF2">
    <property type="glycosylation" value="3 sites, 2 N-linked glycans (2 sites), 1 O-linked glycan (1 site)"/>
</dbReference>
<dbReference type="iPTMnet" id="Q9UJF2"/>
<dbReference type="PhosphoSitePlus" id="Q9UJF2"/>
<dbReference type="BioMuta" id="RASAL2"/>
<dbReference type="DMDM" id="13959419"/>
<dbReference type="jPOST" id="Q9UJF2"/>
<dbReference type="MassIVE" id="Q9UJF2"/>
<dbReference type="PaxDb" id="9606-ENSP00000356621"/>
<dbReference type="PeptideAtlas" id="Q9UJF2"/>
<dbReference type="ProteomicsDB" id="29892"/>
<dbReference type="ProteomicsDB" id="84621">
    <molecule id="Q9UJF2-1"/>
</dbReference>
<dbReference type="Pumba" id="Q9UJF2"/>
<dbReference type="Antibodypedia" id="20575">
    <property type="antibodies" value="154 antibodies from 30 providers"/>
</dbReference>
<dbReference type="DNASU" id="9462"/>
<dbReference type="Ensembl" id="ENST00000367649.8">
    <molecule id="Q9UJF2-2"/>
    <property type="protein sequence ID" value="ENSP00000356621.3"/>
    <property type="gene ID" value="ENSG00000075391.18"/>
</dbReference>
<dbReference type="Ensembl" id="ENST00000462775.5">
    <molecule id="Q9UJF2-1"/>
    <property type="protein sequence ID" value="ENSP00000420558.1"/>
    <property type="gene ID" value="ENSG00000075391.18"/>
</dbReference>
<dbReference type="GeneID" id="9462"/>
<dbReference type="KEGG" id="hsa:9462"/>
<dbReference type="MANE-Select" id="ENST00000367649.8">
    <molecule id="Q9UJF2-2"/>
    <property type="protein sequence ID" value="ENSP00000356621.3"/>
    <property type="RefSeq nucleotide sequence ID" value="NM_170692.4"/>
    <property type="RefSeq protein sequence ID" value="NP_733793.2"/>
</dbReference>
<dbReference type="UCSC" id="uc001glq.4">
    <molecule id="Q9UJF2-1"/>
    <property type="organism name" value="human"/>
</dbReference>
<dbReference type="AGR" id="HGNC:9874"/>
<dbReference type="CTD" id="9462"/>
<dbReference type="DisGeNET" id="9462"/>
<dbReference type="GeneCards" id="RASAL2"/>
<dbReference type="HGNC" id="HGNC:9874">
    <property type="gene designation" value="RASAL2"/>
</dbReference>
<dbReference type="HPA" id="ENSG00000075391">
    <property type="expression patterns" value="Low tissue specificity"/>
</dbReference>
<dbReference type="MalaCards" id="RASAL2"/>
<dbReference type="MIM" id="606136">
    <property type="type" value="gene"/>
</dbReference>
<dbReference type="neXtProt" id="NX_Q9UJF2"/>
<dbReference type="OpenTargets" id="ENSG00000075391"/>
<dbReference type="PharmGKB" id="PA34235"/>
<dbReference type="VEuPathDB" id="HostDB:ENSG00000075391"/>
<dbReference type="eggNOG" id="KOG3508">
    <property type="taxonomic scope" value="Eukaryota"/>
</dbReference>
<dbReference type="GeneTree" id="ENSGT00940000157702"/>
<dbReference type="HOGENOM" id="CLU_001727_1_0_1"/>
<dbReference type="InParanoid" id="Q9UJF2"/>
<dbReference type="OMA" id="HAAQMDH"/>
<dbReference type="OrthoDB" id="5572587at2759"/>
<dbReference type="PAN-GO" id="Q9UJF2">
    <property type="GO annotations" value="0 GO annotations based on evolutionary models"/>
</dbReference>
<dbReference type="PhylomeDB" id="Q9UJF2"/>
<dbReference type="TreeFam" id="TF105303"/>
<dbReference type="PathwayCommons" id="Q9UJF2"/>
<dbReference type="Reactome" id="R-HSA-5658442">
    <property type="pathway name" value="Regulation of RAS by GAPs"/>
</dbReference>
<dbReference type="Reactome" id="R-HSA-9696264">
    <property type="pathway name" value="RND3 GTPase cycle"/>
</dbReference>
<dbReference type="Reactome" id="R-HSA-9696273">
    <property type="pathway name" value="RND1 GTPase cycle"/>
</dbReference>
<dbReference type="SignaLink" id="Q9UJF2"/>
<dbReference type="BioGRID-ORCS" id="9462">
    <property type="hits" value="7 hits in 1154 CRISPR screens"/>
</dbReference>
<dbReference type="CD-CODE" id="FB4E32DD">
    <property type="entry name" value="Presynaptic clusters and postsynaptic densities"/>
</dbReference>
<dbReference type="ChiTaRS" id="RASAL2">
    <property type="organism name" value="human"/>
</dbReference>
<dbReference type="GeneWiki" id="RASAL2"/>
<dbReference type="GenomeRNAi" id="9462"/>
<dbReference type="Pharos" id="Q9UJF2">
    <property type="development level" value="Tbio"/>
</dbReference>
<dbReference type="PRO" id="PR:Q9UJF2"/>
<dbReference type="Proteomes" id="UP000005640">
    <property type="component" value="Chromosome 1"/>
</dbReference>
<dbReference type="RNAct" id="Q9UJF2">
    <property type="molecule type" value="protein"/>
</dbReference>
<dbReference type="Bgee" id="ENSG00000075391">
    <property type="expression patterns" value="Expressed in buccal mucosa cell and 179 other cell types or tissues"/>
</dbReference>
<dbReference type="ExpressionAtlas" id="Q9UJF2">
    <property type="expression patterns" value="baseline and differential"/>
</dbReference>
<dbReference type="GO" id="GO:0005829">
    <property type="term" value="C:cytosol"/>
    <property type="evidence" value="ECO:0000304"/>
    <property type="project" value="Reactome"/>
</dbReference>
<dbReference type="GO" id="GO:0005096">
    <property type="term" value="F:GTPase activator activity"/>
    <property type="evidence" value="ECO:0000304"/>
    <property type="project" value="ProtInc"/>
</dbReference>
<dbReference type="GO" id="GO:0060612">
    <property type="term" value="P:adipose tissue development"/>
    <property type="evidence" value="ECO:0007669"/>
    <property type="project" value="Ensembl"/>
</dbReference>
<dbReference type="GO" id="GO:0010467">
    <property type="term" value="P:gene expression"/>
    <property type="evidence" value="ECO:0007669"/>
    <property type="project" value="Ensembl"/>
</dbReference>
<dbReference type="GO" id="GO:0035264">
    <property type="term" value="P:multicellular organism growth"/>
    <property type="evidence" value="ECO:0007669"/>
    <property type="project" value="Ensembl"/>
</dbReference>
<dbReference type="GO" id="GO:2000257">
    <property type="term" value="P:regulation of protein activation cascade"/>
    <property type="evidence" value="ECO:0007669"/>
    <property type="project" value="Ensembl"/>
</dbReference>
<dbReference type="GO" id="GO:0002021">
    <property type="term" value="P:response to dietary excess"/>
    <property type="evidence" value="ECO:0007669"/>
    <property type="project" value="Ensembl"/>
</dbReference>
<dbReference type="GO" id="GO:0009749">
    <property type="term" value="P:response to glucose"/>
    <property type="evidence" value="ECO:0007669"/>
    <property type="project" value="Ensembl"/>
</dbReference>
<dbReference type="GO" id="GO:0007165">
    <property type="term" value="P:signal transduction"/>
    <property type="evidence" value="ECO:0000304"/>
    <property type="project" value="ProtInc"/>
</dbReference>
<dbReference type="CDD" id="cd04013">
    <property type="entry name" value="C2_SynGAP_like"/>
    <property type="match status" value="1"/>
</dbReference>
<dbReference type="CDD" id="cd05136">
    <property type="entry name" value="RasGAP_DAB2IP"/>
    <property type="match status" value="1"/>
</dbReference>
<dbReference type="FunFam" id="1.10.506.10:FF:000001">
    <property type="entry name" value="Ras GTPase-activating protein nGAP isoform 2"/>
    <property type="match status" value="1"/>
</dbReference>
<dbReference type="FunFam" id="2.60.40.150:FF:000010">
    <property type="entry name" value="Ras GTPase-activating protein nGAP isoform 2"/>
    <property type="match status" value="1"/>
</dbReference>
<dbReference type="Gene3D" id="2.60.40.150">
    <property type="entry name" value="C2 domain"/>
    <property type="match status" value="1"/>
</dbReference>
<dbReference type="Gene3D" id="1.10.506.10">
    <property type="entry name" value="GTPase Activation - p120gap, domain 1"/>
    <property type="match status" value="2"/>
</dbReference>
<dbReference type="InterPro" id="IPR000008">
    <property type="entry name" value="C2_dom"/>
</dbReference>
<dbReference type="InterPro" id="IPR035892">
    <property type="entry name" value="C2_domain_sf"/>
</dbReference>
<dbReference type="InterPro" id="IPR021887">
    <property type="entry name" value="DAB2P_C"/>
</dbReference>
<dbReference type="InterPro" id="IPR001849">
    <property type="entry name" value="PH_domain"/>
</dbReference>
<dbReference type="InterPro" id="IPR039360">
    <property type="entry name" value="Ras_GTPase"/>
</dbReference>
<dbReference type="InterPro" id="IPR023152">
    <property type="entry name" value="RasGAP_CS"/>
</dbReference>
<dbReference type="InterPro" id="IPR001936">
    <property type="entry name" value="RasGAP_dom"/>
</dbReference>
<dbReference type="InterPro" id="IPR008936">
    <property type="entry name" value="Rho_GTPase_activation_prot"/>
</dbReference>
<dbReference type="PANTHER" id="PTHR10194:SF52">
    <property type="entry name" value="RAS GTPASE-ACTIVATING PROTEIN NGAP"/>
    <property type="match status" value="1"/>
</dbReference>
<dbReference type="PANTHER" id="PTHR10194">
    <property type="entry name" value="RAS GTPASE-ACTIVATING PROTEINS"/>
    <property type="match status" value="1"/>
</dbReference>
<dbReference type="Pfam" id="PF00168">
    <property type="entry name" value="C2"/>
    <property type="match status" value="1"/>
</dbReference>
<dbReference type="Pfam" id="PF12004">
    <property type="entry name" value="DAB2P_C"/>
    <property type="match status" value="1"/>
</dbReference>
<dbReference type="Pfam" id="PF25321">
    <property type="entry name" value="PH_RASGAP"/>
    <property type="match status" value="1"/>
</dbReference>
<dbReference type="Pfam" id="PF00616">
    <property type="entry name" value="RasGAP"/>
    <property type="match status" value="1"/>
</dbReference>
<dbReference type="SMART" id="SM00239">
    <property type="entry name" value="C2"/>
    <property type="match status" value="1"/>
</dbReference>
<dbReference type="SMART" id="SM00233">
    <property type="entry name" value="PH"/>
    <property type="match status" value="1"/>
</dbReference>
<dbReference type="SMART" id="SM00323">
    <property type="entry name" value="RasGAP"/>
    <property type="match status" value="1"/>
</dbReference>
<dbReference type="SUPFAM" id="SSF49562">
    <property type="entry name" value="C2 domain (Calcium/lipid-binding domain, CaLB)"/>
    <property type="match status" value="1"/>
</dbReference>
<dbReference type="SUPFAM" id="SSF48350">
    <property type="entry name" value="GTPase activation domain, GAP"/>
    <property type="match status" value="1"/>
</dbReference>
<dbReference type="SUPFAM" id="SSF50729">
    <property type="entry name" value="PH domain-like"/>
    <property type="match status" value="1"/>
</dbReference>
<dbReference type="PROSITE" id="PS50004">
    <property type="entry name" value="C2"/>
    <property type="match status" value="1"/>
</dbReference>
<dbReference type="PROSITE" id="PS00509">
    <property type="entry name" value="RAS_GTPASE_ACTIV_1"/>
    <property type="match status" value="1"/>
</dbReference>
<dbReference type="PROSITE" id="PS50018">
    <property type="entry name" value="RAS_GTPASE_ACTIV_2"/>
    <property type="match status" value="1"/>
</dbReference>
<accession>Q9UJF2</accession>
<accession>F8W755</accession>
<accession>O95174</accession>
<accession>Q2TB22</accession>
<accession>Q5TFU9</accession>
<keyword id="KW-0025">Alternative splicing</keyword>
<keyword id="KW-0343">GTPase activation</keyword>
<keyword id="KW-0597">Phosphoprotein</keyword>
<keyword id="KW-1267">Proteomics identification</keyword>
<keyword id="KW-1185">Reference proteome</keyword>
<gene>
    <name type="primary">RASAL2</name>
    <name type="synonym">NGAP</name>
</gene>
<protein>
    <recommendedName>
        <fullName>Ras GTPase-activating protein nGAP</fullName>
    </recommendedName>
    <alternativeName>
        <fullName>RAS protein activator-like 2</fullName>
    </alternativeName>
</protein>
<feature type="chain" id="PRO_0000056653" description="Ras GTPase-activating protein nGAP">
    <location>
        <begin position="1"/>
        <end position="1139"/>
    </location>
</feature>
<feature type="domain" description="PH">
    <location>
        <begin position="41"/>
        <end position="158"/>
    </location>
</feature>
<feature type="domain" description="C2" evidence="1">
    <location>
        <begin position="149"/>
        <end position="267"/>
    </location>
</feature>
<feature type="domain" description="Ras-GAP" evidence="2">
    <location>
        <begin position="343"/>
        <end position="551"/>
    </location>
</feature>
<feature type="region of interest" description="Disordered" evidence="3">
    <location>
        <begin position="1"/>
        <end position="87"/>
    </location>
</feature>
<feature type="region of interest" description="Disordered" evidence="3">
    <location>
        <begin position="684"/>
        <end position="704"/>
    </location>
</feature>
<feature type="region of interest" description="Disordered" evidence="3">
    <location>
        <begin position="751"/>
        <end position="782"/>
    </location>
</feature>
<feature type="region of interest" description="Disordered" evidence="3">
    <location>
        <begin position="803"/>
        <end position="869"/>
    </location>
</feature>
<feature type="region of interest" description="Disordered" evidence="3">
    <location>
        <begin position="910"/>
        <end position="953"/>
    </location>
</feature>
<feature type="region of interest" description="Disordered" evidence="3">
    <location>
        <begin position="1116"/>
        <end position="1139"/>
    </location>
</feature>
<feature type="compositionally biased region" description="Polar residues" evidence="3">
    <location>
        <begin position="17"/>
        <end position="36"/>
    </location>
</feature>
<feature type="compositionally biased region" description="Basic residues" evidence="3">
    <location>
        <begin position="45"/>
        <end position="56"/>
    </location>
</feature>
<feature type="compositionally biased region" description="Basic and acidic residues" evidence="3">
    <location>
        <begin position="73"/>
        <end position="87"/>
    </location>
</feature>
<feature type="compositionally biased region" description="Polar residues" evidence="3">
    <location>
        <begin position="751"/>
        <end position="760"/>
    </location>
</feature>
<feature type="compositionally biased region" description="Polar residues" evidence="3">
    <location>
        <begin position="803"/>
        <end position="818"/>
    </location>
</feature>
<feature type="compositionally biased region" description="Basic and acidic residues" evidence="3">
    <location>
        <begin position="833"/>
        <end position="855"/>
    </location>
</feature>
<feature type="compositionally biased region" description="Low complexity" evidence="3">
    <location>
        <begin position="916"/>
        <end position="928"/>
    </location>
</feature>
<feature type="site" description="Arginine finger; crucial for GTP hydrolysis by stabilizing the transition state" evidence="2">
    <location>
        <position position="369"/>
    </location>
</feature>
<feature type="modified residue" description="Phosphoserine" evidence="8 11">
    <location>
        <position position="16"/>
    </location>
</feature>
<feature type="modified residue" description="Phosphoserine" evidence="8">
    <location>
        <position position="89"/>
    </location>
</feature>
<feature type="modified residue" description="Phosphothreonine" evidence="10">
    <location>
        <position position="620"/>
    </location>
</feature>
<feature type="modified residue" description="Phosphoserine" evidence="8 10">
    <location>
        <position position="663"/>
    </location>
</feature>
<feature type="modified residue" description="Phosphoserine" evidence="9">
    <location>
        <position position="864"/>
    </location>
</feature>
<feature type="splice variant" id="VSP_045777" description="In isoform 2." evidence="6">
    <original>MQTP</original>
    <variation>MELSPSSGGAAEALSWPEMFPALESDSPLPPEDLDAVVPVSGAVAGGMLDRILLESVCQQQSWVRVYDVKGPPTHRLSCGQSPYTETTTWERKYCILTDSQLVLLNKEKEIPVEGGQEQQTDSTKGRCLRRTVSVPSEGQFPEYPPEGATKL</variation>
    <location>
        <begin position="1"/>
        <end position="4"/>
    </location>
</feature>
<feature type="splice variant" id="VSP_045778" description="In isoform 2." evidence="6">
    <location>
        <begin position="590"/>
        <end position="596"/>
    </location>
</feature>
<feature type="sequence variant" id="VAR_035541" description="In a colorectal cancer sample; somatic mutation; dbSNP:rs765646105." evidence="4">
    <original>R</original>
    <variation>W</variation>
    <location>
        <position position="165"/>
    </location>
</feature>
<feature type="sequence variant" id="VAR_035542" description="In a breast cancer sample; somatic mutation; dbSNP:rs1274912659." evidence="4">
    <original>E</original>
    <variation>D</variation>
    <location>
        <position position="379"/>
    </location>
</feature>